<comment type="function">
    <text evidence="1">Plays a major role in protein secretion by helping the post-translocational extracellular folding of several secreted proteins.</text>
</comment>
<comment type="catalytic activity">
    <reaction evidence="1">
        <text>[protein]-peptidylproline (omega=180) = [protein]-peptidylproline (omega=0)</text>
        <dbReference type="Rhea" id="RHEA:16237"/>
        <dbReference type="Rhea" id="RHEA-COMP:10747"/>
        <dbReference type="Rhea" id="RHEA-COMP:10748"/>
        <dbReference type="ChEBI" id="CHEBI:83833"/>
        <dbReference type="ChEBI" id="CHEBI:83834"/>
        <dbReference type="EC" id="5.2.1.8"/>
    </reaction>
</comment>
<comment type="subcellular location">
    <subcellularLocation>
        <location evidence="1">Cell membrane</location>
        <topology evidence="1">Lipid-anchor</topology>
    </subcellularLocation>
</comment>
<comment type="similarity">
    <text evidence="1">Belongs to the PrsA family.</text>
</comment>
<protein>
    <recommendedName>
        <fullName evidence="1">Foldase protein PrsA</fullName>
        <ecNumber evidence="1">5.2.1.8</ecNumber>
    </recommendedName>
</protein>
<accession>A3CLY1</accession>
<feature type="signal peptide" evidence="1">
    <location>
        <begin position="1"/>
        <end position="20"/>
    </location>
</feature>
<feature type="chain" id="PRO_1000085064" description="Foldase protein PrsA">
    <location>
        <begin position="21"/>
        <end position="335"/>
    </location>
</feature>
<feature type="domain" description="PpiC" evidence="1">
    <location>
        <begin position="142"/>
        <end position="239"/>
    </location>
</feature>
<feature type="region of interest" description="Disordered" evidence="2">
    <location>
        <begin position="300"/>
        <end position="335"/>
    </location>
</feature>
<feature type="compositionally biased region" description="Low complexity" evidence="2">
    <location>
        <begin position="302"/>
        <end position="335"/>
    </location>
</feature>
<feature type="lipid moiety-binding region" description="N-palmitoyl cysteine" evidence="1">
    <location>
        <position position="21"/>
    </location>
</feature>
<feature type="lipid moiety-binding region" description="S-diacylglycerol cysteine" evidence="1">
    <location>
        <position position="21"/>
    </location>
</feature>
<sequence length="335" mass="36314">MKKKIFAGAVTLLSVAVLAACSNSEGKDIVTMKGNTITVNEFYDQVKNNGAAQQVLLQMAIKDIFEEKYGKDVKDKDVKDAFEKSKTAYGTAFAQVLAQNGLTEDAYKEQIRTNMLVEYAVKKAAEKELTDENYKSAFENYTPEVTAQIIKVDSEDKGKEVLEKAKAEGADFSQIAKENSTDAATKEKGGEIKFDSGSTDVPDAVKKAAFALEENGVSDLVTVPDSQYSASYYIVKLVKKSEKSSNWKDYKDKLKKIIIAQKEKDTSFIQSVVAKELKDANIKVKDSAFQSVFAQYIETTGSSTSSSSAASSSKTSESSSAAESSSKEASSSAAE</sequence>
<gene>
    <name evidence="1" type="primary">prsA</name>
    <name type="ordered locus">SSA_0753</name>
</gene>
<evidence type="ECO:0000255" key="1">
    <source>
        <dbReference type="HAMAP-Rule" id="MF_01145"/>
    </source>
</evidence>
<evidence type="ECO:0000256" key="2">
    <source>
        <dbReference type="SAM" id="MobiDB-lite"/>
    </source>
</evidence>
<organism>
    <name type="scientific">Streptococcus sanguinis (strain SK36)</name>
    <dbReference type="NCBI Taxonomy" id="388919"/>
    <lineage>
        <taxon>Bacteria</taxon>
        <taxon>Bacillati</taxon>
        <taxon>Bacillota</taxon>
        <taxon>Bacilli</taxon>
        <taxon>Lactobacillales</taxon>
        <taxon>Streptococcaceae</taxon>
        <taxon>Streptococcus</taxon>
    </lineage>
</organism>
<keyword id="KW-1003">Cell membrane</keyword>
<keyword id="KW-0413">Isomerase</keyword>
<keyword id="KW-0449">Lipoprotein</keyword>
<keyword id="KW-0472">Membrane</keyword>
<keyword id="KW-0564">Palmitate</keyword>
<keyword id="KW-1185">Reference proteome</keyword>
<keyword id="KW-0697">Rotamase</keyword>
<keyword id="KW-0732">Signal</keyword>
<dbReference type="EC" id="5.2.1.8" evidence="1"/>
<dbReference type="EMBL" id="CP000387">
    <property type="protein sequence ID" value="ABN44186.1"/>
    <property type="molecule type" value="Genomic_DNA"/>
</dbReference>
<dbReference type="RefSeq" id="WP_011836702.1">
    <property type="nucleotide sequence ID" value="NC_009009.1"/>
</dbReference>
<dbReference type="RefSeq" id="YP_001034736.1">
    <property type="nucleotide sequence ID" value="NC_009009.1"/>
</dbReference>
<dbReference type="SMR" id="A3CLY1"/>
<dbReference type="STRING" id="388919.SSA_0753"/>
<dbReference type="KEGG" id="ssa:SSA_0753"/>
<dbReference type="PATRIC" id="fig|388919.9.peg.721"/>
<dbReference type="eggNOG" id="COG0760">
    <property type="taxonomic scope" value="Bacteria"/>
</dbReference>
<dbReference type="HOGENOM" id="CLU_034646_6_0_9"/>
<dbReference type="OrthoDB" id="2194386at2"/>
<dbReference type="Proteomes" id="UP000002148">
    <property type="component" value="Chromosome"/>
</dbReference>
<dbReference type="GO" id="GO:0005886">
    <property type="term" value="C:plasma membrane"/>
    <property type="evidence" value="ECO:0007669"/>
    <property type="project" value="UniProtKB-SubCell"/>
</dbReference>
<dbReference type="GO" id="GO:0003755">
    <property type="term" value="F:peptidyl-prolyl cis-trans isomerase activity"/>
    <property type="evidence" value="ECO:0007669"/>
    <property type="project" value="UniProtKB-UniRule"/>
</dbReference>
<dbReference type="GO" id="GO:0006457">
    <property type="term" value="P:protein folding"/>
    <property type="evidence" value="ECO:0007669"/>
    <property type="project" value="UniProtKB-UniRule"/>
</dbReference>
<dbReference type="Gene3D" id="3.10.50.40">
    <property type="match status" value="1"/>
</dbReference>
<dbReference type="Gene3D" id="1.10.4030.10">
    <property type="entry name" value="Porin chaperone SurA, peptide-binding domain"/>
    <property type="match status" value="1"/>
</dbReference>
<dbReference type="HAMAP" id="MF_01145">
    <property type="entry name" value="Foldase_PrsA"/>
    <property type="match status" value="1"/>
</dbReference>
<dbReference type="InterPro" id="IPR023059">
    <property type="entry name" value="Foldase_PrsA"/>
</dbReference>
<dbReference type="InterPro" id="IPR046357">
    <property type="entry name" value="PPIase_dom_sf"/>
</dbReference>
<dbReference type="InterPro" id="IPR000297">
    <property type="entry name" value="PPIase_PpiC"/>
</dbReference>
<dbReference type="InterPro" id="IPR050245">
    <property type="entry name" value="PrsA_foldase"/>
</dbReference>
<dbReference type="InterPro" id="IPR027304">
    <property type="entry name" value="Trigger_fact/SurA_dom_sf"/>
</dbReference>
<dbReference type="NCBIfam" id="NF002361">
    <property type="entry name" value="PRK01326.1"/>
    <property type="match status" value="1"/>
</dbReference>
<dbReference type="PANTHER" id="PTHR47245:SF1">
    <property type="entry name" value="FOLDASE PROTEIN PRSA"/>
    <property type="match status" value="1"/>
</dbReference>
<dbReference type="PANTHER" id="PTHR47245">
    <property type="entry name" value="PEPTIDYLPROLYL ISOMERASE"/>
    <property type="match status" value="1"/>
</dbReference>
<dbReference type="Pfam" id="PF00639">
    <property type="entry name" value="Rotamase"/>
    <property type="match status" value="1"/>
</dbReference>
<dbReference type="SUPFAM" id="SSF54534">
    <property type="entry name" value="FKBP-like"/>
    <property type="match status" value="1"/>
</dbReference>
<dbReference type="SUPFAM" id="SSF109998">
    <property type="entry name" value="Triger factor/SurA peptide-binding domain-like"/>
    <property type="match status" value="1"/>
</dbReference>
<dbReference type="PROSITE" id="PS50198">
    <property type="entry name" value="PPIC_PPIASE_2"/>
    <property type="match status" value="1"/>
</dbReference>
<dbReference type="PROSITE" id="PS51257">
    <property type="entry name" value="PROKAR_LIPOPROTEIN"/>
    <property type="match status" value="1"/>
</dbReference>
<name>PRSA_STRSV</name>
<proteinExistence type="inferred from homology"/>
<reference key="1">
    <citation type="journal article" date="2007" name="J. Bacteriol.">
        <title>Genome of the opportunistic pathogen Streptococcus sanguinis.</title>
        <authorList>
            <person name="Xu P."/>
            <person name="Alves J.M."/>
            <person name="Kitten T."/>
            <person name="Brown A."/>
            <person name="Chen Z."/>
            <person name="Ozaki L.S."/>
            <person name="Manque P."/>
            <person name="Ge X."/>
            <person name="Serrano M.G."/>
            <person name="Puiu D."/>
            <person name="Hendricks S."/>
            <person name="Wang Y."/>
            <person name="Chaplin M.D."/>
            <person name="Akan D."/>
            <person name="Paik S."/>
            <person name="Peterson D.L."/>
            <person name="Macrina F.L."/>
            <person name="Buck G.A."/>
        </authorList>
    </citation>
    <scope>NUCLEOTIDE SEQUENCE [LARGE SCALE GENOMIC DNA]</scope>
    <source>
        <strain>SK36</strain>
    </source>
</reference>